<organism>
    <name type="scientific">Shewanella baltica (strain OS195)</name>
    <dbReference type="NCBI Taxonomy" id="399599"/>
    <lineage>
        <taxon>Bacteria</taxon>
        <taxon>Pseudomonadati</taxon>
        <taxon>Pseudomonadota</taxon>
        <taxon>Gammaproteobacteria</taxon>
        <taxon>Alteromonadales</taxon>
        <taxon>Shewanellaceae</taxon>
        <taxon>Shewanella</taxon>
    </lineage>
</organism>
<name>PEPQ_SHEB9</name>
<protein>
    <recommendedName>
        <fullName evidence="1">Xaa-Pro dipeptidase</fullName>
        <shortName evidence="1">X-Pro dipeptidase</shortName>
        <ecNumber evidence="1">3.4.13.9</ecNumber>
    </recommendedName>
    <alternativeName>
        <fullName evidence="1">Imidodipeptidase</fullName>
    </alternativeName>
    <alternativeName>
        <fullName evidence="1">Proline dipeptidase</fullName>
        <shortName evidence="1">Prolidase</shortName>
    </alternativeName>
</protein>
<comment type="function">
    <text evidence="1">Splits dipeptides with a prolyl residue in the C-terminal position.</text>
</comment>
<comment type="catalytic activity">
    <reaction evidence="1">
        <text>Xaa-L-Pro dipeptide + H2O = an L-alpha-amino acid + L-proline</text>
        <dbReference type="Rhea" id="RHEA:76407"/>
        <dbReference type="ChEBI" id="CHEBI:15377"/>
        <dbReference type="ChEBI" id="CHEBI:59869"/>
        <dbReference type="ChEBI" id="CHEBI:60039"/>
        <dbReference type="ChEBI" id="CHEBI:195196"/>
        <dbReference type="EC" id="3.4.13.9"/>
    </reaction>
</comment>
<comment type="cofactor">
    <cofactor evidence="1">
        <name>Mn(2+)</name>
        <dbReference type="ChEBI" id="CHEBI:29035"/>
    </cofactor>
    <text evidence="1">Binds 2 manganese ions per subunit.</text>
</comment>
<comment type="similarity">
    <text evidence="1">Belongs to the peptidase M24B family. Bacterial-type prolidase subfamily.</text>
</comment>
<proteinExistence type="inferred from homology"/>
<keyword id="KW-0224">Dipeptidase</keyword>
<keyword id="KW-0378">Hydrolase</keyword>
<keyword id="KW-0464">Manganese</keyword>
<keyword id="KW-0479">Metal-binding</keyword>
<keyword id="KW-0482">Metalloprotease</keyword>
<keyword id="KW-0645">Protease</keyword>
<accession>A9KU92</accession>
<feature type="chain" id="PRO_1000085886" description="Xaa-Pro dipeptidase">
    <location>
        <begin position="1"/>
        <end position="440"/>
    </location>
</feature>
<feature type="binding site" evidence="1">
    <location>
        <position position="244"/>
    </location>
    <ligand>
        <name>Mn(2+)</name>
        <dbReference type="ChEBI" id="CHEBI:29035"/>
        <label>2</label>
    </ligand>
</feature>
<feature type="binding site" evidence="1">
    <location>
        <position position="255"/>
    </location>
    <ligand>
        <name>Mn(2+)</name>
        <dbReference type="ChEBI" id="CHEBI:29035"/>
        <label>1</label>
    </ligand>
</feature>
<feature type="binding site" evidence="1">
    <location>
        <position position="255"/>
    </location>
    <ligand>
        <name>Mn(2+)</name>
        <dbReference type="ChEBI" id="CHEBI:29035"/>
        <label>2</label>
    </ligand>
</feature>
<feature type="binding site" evidence="1">
    <location>
        <position position="335"/>
    </location>
    <ligand>
        <name>Mn(2+)</name>
        <dbReference type="ChEBI" id="CHEBI:29035"/>
        <label>1</label>
    </ligand>
</feature>
<feature type="binding site" evidence="1">
    <location>
        <position position="380"/>
    </location>
    <ligand>
        <name>Mn(2+)</name>
        <dbReference type="ChEBI" id="CHEBI:29035"/>
        <label>1</label>
    </ligand>
</feature>
<feature type="binding site" evidence="1">
    <location>
        <position position="419"/>
    </location>
    <ligand>
        <name>Mn(2+)</name>
        <dbReference type="ChEBI" id="CHEBI:29035"/>
        <label>1</label>
    </ligand>
</feature>
<feature type="binding site" evidence="1">
    <location>
        <position position="419"/>
    </location>
    <ligand>
        <name>Mn(2+)</name>
        <dbReference type="ChEBI" id="CHEBI:29035"/>
        <label>2</label>
    </ligand>
</feature>
<sequence length="440" mass="50131">MDQLAHHYRAHIAELNRRVAEILSREALSGLVIHSGQPHRMFLDDINYPFKANPHFKAWLPVLDNPNCWLVVNGRDKPQLIFYRPVDFWHKVSDVPDMFWTEYFDIKLLTKADKVAEFLPTDIANWAYLGEHLDVAEVLGFTSRNPDAVMSYLHYHRTTKTEYELECMRRANQIAVQGHLAAKNAFYNGASEFEIQQHYLSAVGQSENEVPYGNIIALNQNAAILHYTALEHQSPAKRLSFLIDAGASYFGYASDITRTYAFEKNRFDELITAMNKAQLELIDMMRPGVRYPDLHLATHAKVAQMLLDFDLATGDVQGLIDQGITSAFFPHGLGHMLGLQVHDVGGFSHDERGTHIAAPEAHPFLRCTRILAPNQVLTMEPGLYIIDTLLNELKQDSRGQQINWQTVDELRPFGGIRIEDNVIVHQDRNENMTRELGLTD</sequence>
<gene>
    <name evidence="1" type="primary">pepQ</name>
    <name type="ordered locus">Sbal195_0021</name>
</gene>
<dbReference type="EC" id="3.4.13.9" evidence="1"/>
<dbReference type="EMBL" id="CP000891">
    <property type="protein sequence ID" value="ABX47203.1"/>
    <property type="molecule type" value="Genomic_DNA"/>
</dbReference>
<dbReference type="RefSeq" id="WP_006084787.1">
    <property type="nucleotide sequence ID" value="NC_009997.1"/>
</dbReference>
<dbReference type="SMR" id="A9KU92"/>
<dbReference type="MEROPS" id="M24.003"/>
<dbReference type="GeneID" id="11770391"/>
<dbReference type="KEGG" id="sbn:Sbal195_0021"/>
<dbReference type="HOGENOM" id="CLU_050675_0_0_6"/>
<dbReference type="Proteomes" id="UP000000770">
    <property type="component" value="Chromosome"/>
</dbReference>
<dbReference type="GO" id="GO:0005829">
    <property type="term" value="C:cytosol"/>
    <property type="evidence" value="ECO:0007669"/>
    <property type="project" value="TreeGrafter"/>
</dbReference>
<dbReference type="GO" id="GO:0004177">
    <property type="term" value="F:aminopeptidase activity"/>
    <property type="evidence" value="ECO:0007669"/>
    <property type="project" value="TreeGrafter"/>
</dbReference>
<dbReference type="GO" id="GO:0046872">
    <property type="term" value="F:metal ion binding"/>
    <property type="evidence" value="ECO:0007669"/>
    <property type="project" value="UniProtKB-KW"/>
</dbReference>
<dbReference type="GO" id="GO:0008235">
    <property type="term" value="F:metalloexopeptidase activity"/>
    <property type="evidence" value="ECO:0007669"/>
    <property type="project" value="UniProtKB-UniRule"/>
</dbReference>
<dbReference type="GO" id="GO:0016795">
    <property type="term" value="F:phosphoric triester hydrolase activity"/>
    <property type="evidence" value="ECO:0007669"/>
    <property type="project" value="InterPro"/>
</dbReference>
<dbReference type="GO" id="GO:0102009">
    <property type="term" value="F:proline dipeptidase activity"/>
    <property type="evidence" value="ECO:0007669"/>
    <property type="project" value="UniProtKB-EC"/>
</dbReference>
<dbReference type="GO" id="GO:0006508">
    <property type="term" value="P:proteolysis"/>
    <property type="evidence" value="ECO:0007669"/>
    <property type="project" value="UniProtKB-KW"/>
</dbReference>
<dbReference type="CDD" id="cd01087">
    <property type="entry name" value="Prolidase"/>
    <property type="match status" value="1"/>
</dbReference>
<dbReference type="Gene3D" id="3.90.230.10">
    <property type="entry name" value="Creatinase/methionine aminopeptidase superfamily"/>
    <property type="match status" value="1"/>
</dbReference>
<dbReference type="Gene3D" id="3.40.350.10">
    <property type="entry name" value="Creatinase/prolidase N-terminal domain"/>
    <property type="match status" value="1"/>
</dbReference>
<dbReference type="HAMAP" id="MF_01279">
    <property type="entry name" value="X_Pro_dipeptid"/>
    <property type="match status" value="1"/>
</dbReference>
<dbReference type="InterPro" id="IPR029149">
    <property type="entry name" value="Creatin/AminoP/Spt16_N"/>
</dbReference>
<dbReference type="InterPro" id="IPR036005">
    <property type="entry name" value="Creatinase/aminopeptidase-like"/>
</dbReference>
<dbReference type="InterPro" id="IPR048819">
    <property type="entry name" value="PepQ_N"/>
</dbReference>
<dbReference type="InterPro" id="IPR000994">
    <property type="entry name" value="Pept_M24"/>
</dbReference>
<dbReference type="InterPro" id="IPR001131">
    <property type="entry name" value="Peptidase_M24B_aminopep-P_CS"/>
</dbReference>
<dbReference type="InterPro" id="IPR052433">
    <property type="entry name" value="X-Pro_dipept-like"/>
</dbReference>
<dbReference type="InterPro" id="IPR022846">
    <property type="entry name" value="X_Pro_dipept"/>
</dbReference>
<dbReference type="NCBIfam" id="NF010133">
    <property type="entry name" value="PRK13607.1"/>
    <property type="match status" value="1"/>
</dbReference>
<dbReference type="PANTHER" id="PTHR43226">
    <property type="entry name" value="XAA-PRO AMINOPEPTIDASE 3"/>
    <property type="match status" value="1"/>
</dbReference>
<dbReference type="PANTHER" id="PTHR43226:SF8">
    <property type="entry name" value="XAA-PRO DIPEPTIDASE"/>
    <property type="match status" value="1"/>
</dbReference>
<dbReference type="Pfam" id="PF21216">
    <property type="entry name" value="PepQ_N"/>
    <property type="match status" value="1"/>
</dbReference>
<dbReference type="Pfam" id="PF00557">
    <property type="entry name" value="Peptidase_M24"/>
    <property type="match status" value="1"/>
</dbReference>
<dbReference type="SUPFAM" id="SSF55920">
    <property type="entry name" value="Creatinase/aminopeptidase"/>
    <property type="match status" value="1"/>
</dbReference>
<dbReference type="SUPFAM" id="SSF53092">
    <property type="entry name" value="Creatinase/prolidase N-terminal domain"/>
    <property type="match status" value="1"/>
</dbReference>
<dbReference type="PROSITE" id="PS00491">
    <property type="entry name" value="PROLINE_PEPTIDASE"/>
    <property type="match status" value="1"/>
</dbReference>
<evidence type="ECO:0000255" key="1">
    <source>
        <dbReference type="HAMAP-Rule" id="MF_01279"/>
    </source>
</evidence>
<reference key="1">
    <citation type="submission" date="2007-11" db="EMBL/GenBank/DDBJ databases">
        <title>Complete sequence of chromosome of Shewanella baltica OS195.</title>
        <authorList>
            <consortium name="US DOE Joint Genome Institute"/>
            <person name="Copeland A."/>
            <person name="Lucas S."/>
            <person name="Lapidus A."/>
            <person name="Barry K."/>
            <person name="Glavina del Rio T."/>
            <person name="Dalin E."/>
            <person name="Tice H."/>
            <person name="Pitluck S."/>
            <person name="Chain P."/>
            <person name="Malfatti S."/>
            <person name="Shin M."/>
            <person name="Vergez L."/>
            <person name="Schmutz J."/>
            <person name="Larimer F."/>
            <person name="Land M."/>
            <person name="Hauser L."/>
            <person name="Kyrpides N."/>
            <person name="Kim E."/>
            <person name="Brettar I."/>
            <person name="Rodrigues J."/>
            <person name="Konstantinidis K."/>
            <person name="Klappenbach J."/>
            <person name="Hofle M."/>
            <person name="Tiedje J."/>
            <person name="Richardson P."/>
        </authorList>
    </citation>
    <scope>NUCLEOTIDE SEQUENCE [LARGE SCALE GENOMIC DNA]</scope>
    <source>
        <strain>OS195</strain>
    </source>
</reference>